<comment type="function">
    <text evidence="1">Essential role in pre-mRNA splicing. Required in cell cycle progression for S/G(2) transition.</text>
</comment>
<comment type="subunit">
    <text evidence="2">Homodimer. Interacts with the U5-102 kDa protein subunit of the spliceosome.</text>
</comment>
<comment type="interaction">
    <interactant intactId="EBI-10309345">
        <id>Q9NX01</id>
    </interactant>
    <interactant intactId="EBI-6557414">
        <id>Q9NZN9</id>
        <label>AIPL1</label>
    </interactant>
    <organismsDiffer>false</organismsDiffer>
    <experiments>3</experiments>
</comment>
<comment type="interaction">
    <interactant intactId="EBI-10309345">
        <id>Q9NX01</id>
    </interactant>
    <interactant intactId="EBI-8637516">
        <id>Q9NXW9</id>
        <label>ALKBH4</label>
    </interactant>
    <organismsDiffer>false</organismsDiffer>
    <experiments>3</experiments>
</comment>
<comment type="interaction">
    <interactant intactId="EBI-10309345">
        <id>Q9NX01</id>
    </interactant>
    <interactant intactId="EBI-711810">
        <id>O14503</id>
        <label>BHLHE40</label>
    </interactant>
    <organismsDiffer>false</organismsDiffer>
    <experiments>3</experiments>
</comment>
<comment type="interaction">
    <interactant intactId="EBI-10309345">
        <id>Q9NX01</id>
    </interactant>
    <interactant intactId="EBI-11028020">
        <id>Q86UT8</id>
        <label>CENATAC</label>
    </interactant>
    <organismsDiffer>false</organismsDiffer>
    <experiments>9</experiments>
</comment>
<comment type="interaction">
    <interactant intactId="EBI-10309345">
        <id>Q9NX01</id>
    </interactant>
    <interactant intactId="EBI-2864512">
        <id>P50221</id>
        <label>MEOX1</label>
    </interactant>
    <organismsDiffer>false</organismsDiffer>
    <experiments>3</experiments>
</comment>
<comment type="interaction">
    <interactant intactId="EBI-10309345">
        <id>Q9NX01</id>
    </interactant>
    <interactant intactId="EBI-16439278">
        <id>Q6FHY5</id>
        <label>MEOX2</label>
    </interactant>
    <organismsDiffer>false</organismsDiffer>
    <experiments>3</experiments>
</comment>
<comment type="interaction">
    <interactant intactId="EBI-10309345">
        <id>Q9NX01</id>
    </interactant>
    <interactant intactId="EBI-79165">
        <id>Q9NRD5</id>
        <label>PICK1</label>
    </interactant>
    <organismsDiffer>false</organismsDiffer>
    <experiments>3</experiments>
</comment>
<comment type="interaction">
    <interactant intactId="EBI-10309345">
        <id>Q9NX01</id>
    </interactant>
    <interactant intactId="EBI-742388">
        <id>Q9H8W4</id>
        <label>PLEKHF2</label>
    </interactant>
    <organismsDiffer>false</organismsDiffer>
    <experiments>3</experiments>
</comment>
<comment type="interaction">
    <interactant intactId="EBI-10309345">
        <id>Q9NX01</id>
    </interactant>
    <interactant intactId="EBI-10171633">
        <id>Q96PV4</id>
        <label>PNMA5</label>
    </interactant>
    <organismsDiffer>false</organismsDiffer>
    <experiments>3</experiments>
</comment>
<comment type="interaction">
    <interactant intactId="EBI-10309345">
        <id>Q9NX01</id>
    </interactant>
    <interactant intactId="EBI-307352">
        <id>Q04864</id>
        <label>REL</label>
    </interactant>
    <organismsDiffer>false</organismsDiffer>
    <experiments>3</experiments>
</comment>
<comment type="interaction">
    <interactant intactId="EBI-10309345">
        <id>Q9NX01</id>
    </interactant>
    <interactant intactId="EBI-12223157">
        <id>Q15637-4</id>
        <label>SF1</label>
    </interactant>
    <organismsDiffer>false</organismsDiffer>
    <experiments>3</experiments>
</comment>
<comment type="interaction">
    <interactant intactId="EBI-10309345">
        <id>Q9NX01</id>
    </interactant>
    <interactant intactId="EBI-742688">
        <id>Q9NZD8</id>
        <label>SPG21</label>
    </interactant>
    <organismsDiffer>false</organismsDiffer>
    <experiments>6</experiments>
</comment>
<comment type="interaction">
    <interactant intactId="EBI-10309345">
        <id>Q9NX01</id>
    </interactant>
    <interactant intactId="EBI-533224">
        <id>P15884</id>
        <label>TCF4</label>
    </interactant>
    <organismsDiffer>false</organismsDiffer>
    <experiments>4</experiments>
</comment>
<comment type="subcellular location">
    <subcellularLocation>
        <location evidence="1">Nucleus</location>
    </subcellularLocation>
</comment>
<comment type="similarity">
    <text evidence="3">Belongs to the DIM1 family.</text>
</comment>
<reference key="1">
    <citation type="journal article" date="2004" name="J. Biol. Chem.">
        <title>DLP, a novel Dim1 family protein implicated in pre-mRNA splicing and cell cycle progression.</title>
        <authorList>
            <person name="Sun X."/>
            <person name="Zhang H."/>
            <person name="Wang D."/>
            <person name="Ma D."/>
            <person name="Shen Y."/>
            <person name="Shang Y."/>
        </authorList>
    </citation>
    <scope>NUCLEOTIDE SEQUENCE [MRNA]</scope>
    <scope>FUNCTION</scope>
    <scope>SUBCELLULAR LOCATION</scope>
</reference>
<reference key="2">
    <citation type="journal article" date="2004" name="Nat. Genet.">
        <title>Complete sequencing and characterization of 21,243 full-length human cDNAs.</title>
        <authorList>
            <person name="Ota T."/>
            <person name="Suzuki Y."/>
            <person name="Nishikawa T."/>
            <person name="Otsuki T."/>
            <person name="Sugiyama T."/>
            <person name="Irie R."/>
            <person name="Wakamatsu A."/>
            <person name="Hayashi K."/>
            <person name="Sato H."/>
            <person name="Nagai K."/>
            <person name="Kimura K."/>
            <person name="Makita H."/>
            <person name="Sekine M."/>
            <person name="Obayashi M."/>
            <person name="Nishi T."/>
            <person name="Shibahara T."/>
            <person name="Tanaka T."/>
            <person name="Ishii S."/>
            <person name="Yamamoto J."/>
            <person name="Saito K."/>
            <person name="Kawai Y."/>
            <person name="Isono Y."/>
            <person name="Nakamura Y."/>
            <person name="Nagahari K."/>
            <person name="Murakami K."/>
            <person name="Yasuda T."/>
            <person name="Iwayanagi T."/>
            <person name="Wagatsuma M."/>
            <person name="Shiratori A."/>
            <person name="Sudo H."/>
            <person name="Hosoiri T."/>
            <person name="Kaku Y."/>
            <person name="Kodaira H."/>
            <person name="Kondo H."/>
            <person name="Sugawara M."/>
            <person name="Takahashi M."/>
            <person name="Kanda K."/>
            <person name="Yokoi T."/>
            <person name="Furuya T."/>
            <person name="Kikkawa E."/>
            <person name="Omura Y."/>
            <person name="Abe K."/>
            <person name="Kamihara K."/>
            <person name="Katsuta N."/>
            <person name="Sato K."/>
            <person name="Tanikawa M."/>
            <person name="Yamazaki M."/>
            <person name="Ninomiya K."/>
            <person name="Ishibashi T."/>
            <person name="Yamashita H."/>
            <person name="Murakawa K."/>
            <person name="Fujimori K."/>
            <person name="Tanai H."/>
            <person name="Kimata M."/>
            <person name="Watanabe M."/>
            <person name="Hiraoka S."/>
            <person name="Chiba Y."/>
            <person name="Ishida S."/>
            <person name="Ono Y."/>
            <person name="Takiguchi S."/>
            <person name="Watanabe S."/>
            <person name="Yosida M."/>
            <person name="Hotuta T."/>
            <person name="Kusano J."/>
            <person name="Kanehori K."/>
            <person name="Takahashi-Fujii A."/>
            <person name="Hara H."/>
            <person name="Tanase T.-O."/>
            <person name="Nomura Y."/>
            <person name="Togiya S."/>
            <person name="Komai F."/>
            <person name="Hara R."/>
            <person name="Takeuchi K."/>
            <person name="Arita M."/>
            <person name="Imose N."/>
            <person name="Musashino K."/>
            <person name="Yuuki H."/>
            <person name="Oshima A."/>
            <person name="Sasaki N."/>
            <person name="Aotsuka S."/>
            <person name="Yoshikawa Y."/>
            <person name="Matsunawa H."/>
            <person name="Ichihara T."/>
            <person name="Shiohata N."/>
            <person name="Sano S."/>
            <person name="Moriya S."/>
            <person name="Momiyama H."/>
            <person name="Satoh N."/>
            <person name="Takami S."/>
            <person name="Terashima Y."/>
            <person name="Suzuki O."/>
            <person name="Nakagawa S."/>
            <person name="Senoh A."/>
            <person name="Mizoguchi H."/>
            <person name="Goto Y."/>
            <person name="Shimizu F."/>
            <person name="Wakebe H."/>
            <person name="Hishigaki H."/>
            <person name="Watanabe T."/>
            <person name="Sugiyama A."/>
            <person name="Takemoto M."/>
            <person name="Kawakami B."/>
            <person name="Yamazaki M."/>
            <person name="Watanabe K."/>
            <person name="Kumagai A."/>
            <person name="Itakura S."/>
            <person name="Fukuzumi Y."/>
            <person name="Fujimori Y."/>
            <person name="Komiyama M."/>
            <person name="Tashiro H."/>
            <person name="Tanigami A."/>
            <person name="Fujiwara T."/>
            <person name="Ono T."/>
            <person name="Yamada K."/>
            <person name="Fujii Y."/>
            <person name="Ozaki K."/>
            <person name="Hirao M."/>
            <person name="Ohmori Y."/>
            <person name="Kawabata A."/>
            <person name="Hikiji T."/>
            <person name="Kobatake N."/>
            <person name="Inagaki H."/>
            <person name="Ikema Y."/>
            <person name="Okamoto S."/>
            <person name="Okitani R."/>
            <person name="Kawakami T."/>
            <person name="Noguchi S."/>
            <person name="Itoh T."/>
            <person name="Shigeta K."/>
            <person name="Senba T."/>
            <person name="Matsumura K."/>
            <person name="Nakajima Y."/>
            <person name="Mizuno T."/>
            <person name="Morinaga M."/>
            <person name="Sasaki M."/>
            <person name="Togashi T."/>
            <person name="Oyama M."/>
            <person name="Hata H."/>
            <person name="Watanabe M."/>
            <person name="Komatsu T."/>
            <person name="Mizushima-Sugano J."/>
            <person name="Satoh T."/>
            <person name="Shirai Y."/>
            <person name="Takahashi Y."/>
            <person name="Nakagawa K."/>
            <person name="Okumura K."/>
            <person name="Nagase T."/>
            <person name="Nomura N."/>
            <person name="Kikuchi H."/>
            <person name="Masuho Y."/>
            <person name="Yamashita R."/>
            <person name="Nakai K."/>
            <person name="Yada T."/>
            <person name="Nakamura Y."/>
            <person name="Ohara O."/>
            <person name="Isogai T."/>
            <person name="Sugano S."/>
        </authorList>
    </citation>
    <scope>NUCLEOTIDE SEQUENCE [LARGE SCALE MRNA]</scope>
</reference>
<reference key="3">
    <citation type="submission" date="2004-06" db="EMBL/GenBank/DDBJ databases">
        <title>Cloning of human full open reading frames in Gateway(TM) system entry vector (pDONR201).</title>
        <authorList>
            <person name="Ebert L."/>
            <person name="Schick M."/>
            <person name="Neubert P."/>
            <person name="Schatten R."/>
            <person name="Henze S."/>
            <person name="Korn B."/>
        </authorList>
    </citation>
    <scope>NUCLEOTIDE SEQUENCE [LARGE SCALE MRNA]</scope>
</reference>
<reference key="4">
    <citation type="submission" date="2005-09" db="EMBL/GenBank/DDBJ databases">
        <authorList>
            <person name="Mural R.J."/>
            <person name="Istrail S."/>
            <person name="Sutton G.G."/>
            <person name="Florea L."/>
            <person name="Halpern A.L."/>
            <person name="Mobarry C.M."/>
            <person name="Lippert R."/>
            <person name="Walenz B."/>
            <person name="Shatkay H."/>
            <person name="Dew I."/>
            <person name="Miller J.R."/>
            <person name="Flanigan M.J."/>
            <person name="Edwards N.J."/>
            <person name="Bolanos R."/>
            <person name="Fasulo D."/>
            <person name="Halldorsson B.V."/>
            <person name="Hannenhalli S."/>
            <person name="Turner R."/>
            <person name="Yooseph S."/>
            <person name="Lu F."/>
            <person name="Nusskern D.R."/>
            <person name="Shue B.C."/>
            <person name="Zheng X.H."/>
            <person name="Zhong F."/>
            <person name="Delcher A.L."/>
            <person name="Huson D.H."/>
            <person name="Kravitz S.A."/>
            <person name="Mouchard L."/>
            <person name="Reinert K."/>
            <person name="Remington K.A."/>
            <person name="Clark A.G."/>
            <person name="Waterman M.S."/>
            <person name="Eichler E.E."/>
            <person name="Adams M.D."/>
            <person name="Hunkapiller M.W."/>
            <person name="Myers E.W."/>
            <person name="Venter J.C."/>
        </authorList>
    </citation>
    <scope>NUCLEOTIDE SEQUENCE [LARGE SCALE GENOMIC DNA]</scope>
</reference>
<reference key="5">
    <citation type="journal article" date="2004" name="Genome Res.">
        <title>The status, quality, and expansion of the NIH full-length cDNA project: the Mammalian Gene Collection (MGC).</title>
        <authorList>
            <consortium name="The MGC Project Team"/>
        </authorList>
    </citation>
    <scope>NUCLEOTIDE SEQUENCE [LARGE SCALE MRNA]</scope>
    <source>
        <tissue>Cervix</tissue>
    </source>
</reference>
<reference key="6">
    <citation type="journal article" date="2008" name="Proc. Natl. Acad. Sci. U.S.A.">
        <title>A quantitative atlas of mitotic phosphorylation.</title>
        <authorList>
            <person name="Dephoure N."/>
            <person name="Zhou C."/>
            <person name="Villen J."/>
            <person name="Beausoleil S.A."/>
            <person name="Bakalarski C.E."/>
            <person name="Elledge S.J."/>
            <person name="Gygi S.P."/>
        </authorList>
    </citation>
    <scope>IDENTIFICATION BY MASS SPECTROMETRY [LARGE SCALE ANALYSIS]</scope>
    <source>
        <tissue>Cervix carcinoma</tissue>
    </source>
</reference>
<reference key="7">
    <citation type="journal article" date="2005" name="Biochemistry">
        <title>Biochemical characterization and crystal structure of a Dim1 family associated protein: Dim2.</title>
        <authorList>
            <person name="Simeoni F."/>
            <person name="Arvai A."/>
            <person name="Bello P."/>
            <person name="Gondeau C."/>
            <person name="Hopfner K.-P."/>
            <person name="Neyroz P."/>
            <person name="Heitz F."/>
            <person name="Tainer J."/>
            <person name="Divita G."/>
        </authorList>
    </citation>
    <scope>X-RAY CRYSTALLOGRAPHY (2.5 ANGSTROMS)</scope>
    <scope>SUBUNIT</scope>
</reference>
<organism>
    <name type="scientific">Homo sapiens</name>
    <name type="common">Human</name>
    <dbReference type="NCBI Taxonomy" id="9606"/>
    <lineage>
        <taxon>Eukaryota</taxon>
        <taxon>Metazoa</taxon>
        <taxon>Chordata</taxon>
        <taxon>Craniata</taxon>
        <taxon>Vertebrata</taxon>
        <taxon>Euteleostomi</taxon>
        <taxon>Mammalia</taxon>
        <taxon>Eutheria</taxon>
        <taxon>Euarchontoglires</taxon>
        <taxon>Primates</taxon>
        <taxon>Haplorrhini</taxon>
        <taxon>Catarrhini</taxon>
        <taxon>Hominidae</taxon>
        <taxon>Homo</taxon>
    </lineage>
</organism>
<feature type="chain" id="PRO_0000218289" description="Thioredoxin-like protein 4B">
    <location>
        <begin position="1"/>
        <end position="149"/>
    </location>
</feature>
<feature type="helix" evidence="5">
    <location>
        <begin position="11"/>
        <end position="20"/>
    </location>
</feature>
<feature type="strand" evidence="5">
    <location>
        <begin position="23"/>
        <end position="31"/>
    </location>
</feature>
<feature type="strand" evidence="4">
    <location>
        <begin position="33"/>
        <end position="35"/>
    </location>
</feature>
<feature type="helix" evidence="5">
    <location>
        <begin position="36"/>
        <end position="49"/>
    </location>
</feature>
<feature type="turn" evidence="5">
    <location>
        <begin position="50"/>
        <end position="55"/>
    </location>
</feature>
<feature type="strand" evidence="5">
    <location>
        <begin position="56"/>
        <end position="62"/>
    </location>
</feature>
<feature type="turn" evidence="5">
    <location>
        <begin position="63"/>
        <end position="65"/>
    </location>
</feature>
<feature type="helix" evidence="5">
    <location>
        <begin position="68"/>
        <end position="72"/>
    </location>
</feature>
<feature type="strand" evidence="5">
    <location>
        <begin position="77"/>
        <end position="85"/>
    </location>
</feature>
<feature type="strand" evidence="5">
    <location>
        <begin position="88"/>
        <end position="93"/>
    </location>
</feature>
<feature type="strand" evidence="5">
    <location>
        <begin position="95"/>
        <end position="97"/>
    </location>
</feature>
<feature type="strand" evidence="5">
    <location>
        <begin position="102"/>
        <end position="104"/>
    </location>
</feature>
<feature type="helix" evidence="5">
    <location>
        <begin position="109"/>
        <end position="124"/>
    </location>
</feature>
<feature type="strand" evidence="5">
    <location>
        <begin position="128"/>
        <end position="131"/>
    </location>
</feature>
<feature type="helix" evidence="5">
    <location>
        <begin position="136"/>
        <end position="138"/>
    </location>
</feature>
<gene>
    <name type="primary">TXNL4B</name>
    <name type="synonym">DIM2</name>
    <name type="synonym">DLP</name>
</gene>
<protein>
    <recommendedName>
        <fullName>Thioredoxin-like protein 4B</fullName>
    </recommendedName>
    <alternativeName>
        <fullName>Dim1-like protein</fullName>
    </alternativeName>
</protein>
<proteinExistence type="evidence at protein level"/>
<sequence length="149" mass="17015">MSFLLPKLTSKKEVDQAIKSTAEKVLVLRFGRDEDPVCLQLDDILSKTSSDLSKMAAIYLVDVDQTAVYTQYFDISYIPSTVFFFNGQHMKVDYGSPDHTKFVGSFKTKQDFIDLIEVIYRGAMRGKLIVQSPIDPKNIPKYDLLYQDI</sequence>
<name>TXN4B_HUMAN</name>
<accession>Q9NX01</accession>
<accession>D3DWS6</accession>
<keyword id="KW-0002">3D-structure</keyword>
<keyword id="KW-0131">Cell cycle</keyword>
<keyword id="KW-0507">mRNA processing</keyword>
<keyword id="KW-0508">mRNA splicing</keyword>
<keyword id="KW-0539">Nucleus</keyword>
<keyword id="KW-1267">Proteomics identification</keyword>
<keyword id="KW-1185">Reference proteome</keyword>
<evidence type="ECO:0000269" key="1">
    <source>
    </source>
</evidence>
<evidence type="ECO:0000269" key="2">
    <source>
    </source>
</evidence>
<evidence type="ECO:0000305" key="3"/>
<evidence type="ECO:0007829" key="4">
    <source>
        <dbReference type="PDB" id="1XBS"/>
    </source>
</evidence>
<evidence type="ECO:0007829" key="5">
    <source>
        <dbReference type="PDB" id="4IN0"/>
    </source>
</evidence>
<dbReference type="EMBL" id="AY566808">
    <property type="protein sequence ID" value="AAS68520.1"/>
    <property type="molecule type" value="mRNA"/>
</dbReference>
<dbReference type="EMBL" id="AK000518">
    <property type="protein sequence ID" value="BAA91224.1"/>
    <property type="molecule type" value="mRNA"/>
</dbReference>
<dbReference type="EMBL" id="CR457240">
    <property type="protein sequence ID" value="CAG33521.1"/>
    <property type="molecule type" value="mRNA"/>
</dbReference>
<dbReference type="EMBL" id="CH471166">
    <property type="protein sequence ID" value="EAW59191.1"/>
    <property type="molecule type" value="Genomic_DNA"/>
</dbReference>
<dbReference type="EMBL" id="CH471166">
    <property type="protein sequence ID" value="EAW59192.1"/>
    <property type="molecule type" value="Genomic_DNA"/>
</dbReference>
<dbReference type="EMBL" id="BC009646">
    <property type="protein sequence ID" value="AAH09646.1"/>
    <property type="molecule type" value="mRNA"/>
</dbReference>
<dbReference type="CCDS" id="CCDS10906.1"/>
<dbReference type="RefSeq" id="NP_001135789.1">
    <property type="nucleotide sequence ID" value="NM_001142317.2"/>
</dbReference>
<dbReference type="RefSeq" id="NP_001135790.1">
    <property type="nucleotide sequence ID" value="NM_001142318.2"/>
</dbReference>
<dbReference type="RefSeq" id="NP_060323.1">
    <property type="nucleotide sequence ID" value="NM_017853.3"/>
</dbReference>
<dbReference type="RefSeq" id="XP_054236564.1">
    <property type="nucleotide sequence ID" value="XM_054380589.1"/>
</dbReference>
<dbReference type="PDB" id="1XBS">
    <property type="method" value="X-ray"/>
    <property type="resolution" value="2.50 A"/>
    <property type="chains" value="A=1-149"/>
</dbReference>
<dbReference type="PDB" id="3GIX">
    <property type="method" value="X-ray"/>
    <property type="resolution" value="1.33 A"/>
    <property type="chains" value="A/B=2-149"/>
</dbReference>
<dbReference type="PDB" id="4IN0">
    <property type="method" value="X-ray"/>
    <property type="resolution" value="1.33 A"/>
    <property type="chains" value="A/B=2-149"/>
</dbReference>
<dbReference type="PDB" id="8Y6O">
    <property type="method" value="EM"/>
    <property type="resolution" value="3.38 A"/>
    <property type="chains" value="H=1-149"/>
</dbReference>
<dbReference type="PDBsum" id="1XBS"/>
<dbReference type="PDBsum" id="3GIX"/>
<dbReference type="PDBsum" id="4IN0"/>
<dbReference type="PDBsum" id="8Y6O"/>
<dbReference type="EMDB" id="EMD-38993"/>
<dbReference type="SMR" id="Q9NX01"/>
<dbReference type="BioGRID" id="120295">
    <property type="interactions" value="41"/>
</dbReference>
<dbReference type="FunCoup" id="Q9NX01">
    <property type="interactions" value="1085"/>
</dbReference>
<dbReference type="IntAct" id="Q9NX01">
    <property type="interactions" value="23"/>
</dbReference>
<dbReference type="STRING" id="9606.ENSP00000268483"/>
<dbReference type="GlyGen" id="Q9NX01">
    <property type="glycosylation" value="1 site, 1 O-linked glycan (1 site)"/>
</dbReference>
<dbReference type="iPTMnet" id="Q9NX01"/>
<dbReference type="PhosphoSitePlus" id="Q9NX01"/>
<dbReference type="BioMuta" id="TXNL4B"/>
<dbReference type="DMDM" id="51702156"/>
<dbReference type="jPOST" id="Q9NX01"/>
<dbReference type="MassIVE" id="Q9NX01"/>
<dbReference type="PaxDb" id="9606-ENSP00000268483"/>
<dbReference type="PeptideAtlas" id="Q9NX01"/>
<dbReference type="ProteomicsDB" id="83008"/>
<dbReference type="Pumba" id="Q9NX01"/>
<dbReference type="Antibodypedia" id="30184">
    <property type="antibodies" value="95 antibodies from 23 providers"/>
</dbReference>
<dbReference type="DNASU" id="54957"/>
<dbReference type="Ensembl" id="ENST00000268483.8">
    <property type="protein sequence ID" value="ENSP00000268483.3"/>
    <property type="gene ID" value="ENSG00000140830.10"/>
</dbReference>
<dbReference type="Ensembl" id="ENST00000423037.5">
    <property type="protein sequence ID" value="ENSP00000408130.1"/>
    <property type="gene ID" value="ENSG00000140830.10"/>
</dbReference>
<dbReference type="Ensembl" id="ENST00000426362.6">
    <property type="protein sequence ID" value="ENSP00000392310.2"/>
    <property type="gene ID" value="ENSG00000140830.10"/>
</dbReference>
<dbReference type="GeneID" id="54957"/>
<dbReference type="KEGG" id="hsa:54957"/>
<dbReference type="MANE-Select" id="ENST00000268483.8">
    <property type="protein sequence ID" value="ENSP00000268483.3"/>
    <property type="RefSeq nucleotide sequence ID" value="NM_017853.3"/>
    <property type="RefSeq protein sequence ID" value="NP_060323.1"/>
</dbReference>
<dbReference type="UCSC" id="uc002fca.4">
    <property type="organism name" value="human"/>
</dbReference>
<dbReference type="AGR" id="HGNC:26041"/>
<dbReference type="CTD" id="54957"/>
<dbReference type="DisGeNET" id="54957"/>
<dbReference type="GeneCards" id="TXNL4B"/>
<dbReference type="HGNC" id="HGNC:26041">
    <property type="gene designation" value="TXNL4B"/>
</dbReference>
<dbReference type="HPA" id="ENSG00000140830">
    <property type="expression patterns" value="Low tissue specificity"/>
</dbReference>
<dbReference type="MIM" id="617722">
    <property type="type" value="gene"/>
</dbReference>
<dbReference type="neXtProt" id="NX_Q9NX01"/>
<dbReference type="OpenTargets" id="ENSG00000140830"/>
<dbReference type="PharmGKB" id="PA134944912"/>
<dbReference type="VEuPathDB" id="HostDB:ENSG00000140830"/>
<dbReference type="eggNOG" id="KOG3414">
    <property type="taxonomic scope" value="Eukaryota"/>
</dbReference>
<dbReference type="GeneTree" id="ENSGT00390000010779"/>
<dbReference type="HOGENOM" id="CLU_117348_1_0_1"/>
<dbReference type="InParanoid" id="Q9NX01"/>
<dbReference type="OMA" id="NIPKYEL"/>
<dbReference type="OrthoDB" id="147752at2759"/>
<dbReference type="PAN-GO" id="Q9NX01">
    <property type="GO annotations" value="3 GO annotations based on evolutionary models"/>
</dbReference>
<dbReference type="PhylomeDB" id="Q9NX01"/>
<dbReference type="TreeFam" id="TF332397"/>
<dbReference type="PathwayCommons" id="Q9NX01"/>
<dbReference type="SignaLink" id="Q9NX01"/>
<dbReference type="BioGRID-ORCS" id="54957">
    <property type="hits" value="608 hits in 1149 CRISPR screens"/>
</dbReference>
<dbReference type="ChiTaRS" id="TXNL4B">
    <property type="organism name" value="human"/>
</dbReference>
<dbReference type="EvolutionaryTrace" id="Q9NX01"/>
<dbReference type="GeneWiki" id="TXNL4B"/>
<dbReference type="GenomeRNAi" id="54957"/>
<dbReference type="Pharos" id="Q9NX01">
    <property type="development level" value="Tbio"/>
</dbReference>
<dbReference type="PRO" id="PR:Q9NX01"/>
<dbReference type="Proteomes" id="UP000005640">
    <property type="component" value="Chromosome 16"/>
</dbReference>
<dbReference type="RNAct" id="Q9NX01">
    <property type="molecule type" value="protein"/>
</dbReference>
<dbReference type="Bgee" id="ENSG00000140830">
    <property type="expression patterns" value="Expressed in medial globus pallidus and 188 other cell types or tissues"/>
</dbReference>
<dbReference type="ExpressionAtlas" id="Q9NX01">
    <property type="expression patterns" value="baseline and differential"/>
</dbReference>
<dbReference type="GO" id="GO:0005829">
    <property type="term" value="C:cytosol"/>
    <property type="evidence" value="ECO:0000314"/>
    <property type="project" value="HPA"/>
</dbReference>
<dbReference type="GO" id="GO:0005654">
    <property type="term" value="C:nucleoplasm"/>
    <property type="evidence" value="ECO:0000314"/>
    <property type="project" value="HPA"/>
</dbReference>
<dbReference type="GO" id="GO:0005681">
    <property type="term" value="C:spliceosomal complex"/>
    <property type="evidence" value="ECO:0000318"/>
    <property type="project" value="GO_Central"/>
</dbReference>
<dbReference type="GO" id="GO:0046540">
    <property type="term" value="C:U4/U6 x U5 tri-snRNP complex"/>
    <property type="evidence" value="ECO:0000318"/>
    <property type="project" value="GO_Central"/>
</dbReference>
<dbReference type="GO" id="GO:0005682">
    <property type="term" value="C:U5 snRNP"/>
    <property type="evidence" value="ECO:0000318"/>
    <property type="project" value="GO_Central"/>
</dbReference>
<dbReference type="GO" id="GO:0000398">
    <property type="term" value="P:mRNA splicing, via spliceosome"/>
    <property type="evidence" value="ECO:0007669"/>
    <property type="project" value="InterPro"/>
</dbReference>
<dbReference type="CDD" id="cd02986">
    <property type="entry name" value="DLP"/>
    <property type="match status" value="1"/>
</dbReference>
<dbReference type="FunFam" id="3.40.30.10:FF:000059">
    <property type="entry name" value="Thioredoxin-like protein"/>
    <property type="match status" value="1"/>
</dbReference>
<dbReference type="Gene3D" id="3.40.30.10">
    <property type="entry name" value="Glutaredoxin"/>
    <property type="match status" value="1"/>
</dbReference>
<dbReference type="InterPro" id="IPR004123">
    <property type="entry name" value="Dim1"/>
</dbReference>
<dbReference type="InterPro" id="IPR036249">
    <property type="entry name" value="Thioredoxin-like_sf"/>
</dbReference>
<dbReference type="PANTHER" id="PTHR12052:SF4">
    <property type="entry name" value="THIOREDOXIN-LIKE PROTEIN 4B"/>
    <property type="match status" value="1"/>
</dbReference>
<dbReference type="PANTHER" id="PTHR12052">
    <property type="entry name" value="THIOREDOXIN-LIKE PROTEN 4A, 4B"/>
    <property type="match status" value="1"/>
</dbReference>
<dbReference type="Pfam" id="PF02966">
    <property type="entry name" value="DIM1"/>
    <property type="match status" value="1"/>
</dbReference>
<dbReference type="PIRSF" id="PIRSF017199">
    <property type="entry name" value="mRNA_splic_U5"/>
    <property type="match status" value="1"/>
</dbReference>
<dbReference type="SMART" id="SM01410">
    <property type="entry name" value="DIM1"/>
    <property type="match status" value="1"/>
</dbReference>
<dbReference type="SUPFAM" id="SSF52833">
    <property type="entry name" value="Thioredoxin-like"/>
    <property type="match status" value="1"/>
</dbReference>